<dbReference type="EC" id="4.1.1.39" evidence="1"/>
<dbReference type="EMBL" id="EU262889">
    <property type="protein sequence ID" value="ABW98855.1"/>
    <property type="molecule type" value="Genomic_DNA"/>
</dbReference>
<dbReference type="RefSeq" id="YP_001687350.1">
    <property type="nucleotide sequence ID" value="NC_010361.1"/>
</dbReference>
<dbReference type="SMR" id="B0Z4U3"/>
<dbReference type="GeneID" id="5952063"/>
<dbReference type="GO" id="GO:0009507">
    <property type="term" value="C:chloroplast"/>
    <property type="evidence" value="ECO:0007669"/>
    <property type="project" value="UniProtKB-SubCell"/>
</dbReference>
<dbReference type="GO" id="GO:0000287">
    <property type="term" value="F:magnesium ion binding"/>
    <property type="evidence" value="ECO:0007669"/>
    <property type="project" value="UniProtKB-UniRule"/>
</dbReference>
<dbReference type="GO" id="GO:0004497">
    <property type="term" value="F:monooxygenase activity"/>
    <property type="evidence" value="ECO:0007669"/>
    <property type="project" value="UniProtKB-KW"/>
</dbReference>
<dbReference type="GO" id="GO:0016984">
    <property type="term" value="F:ribulose-bisphosphate carboxylase activity"/>
    <property type="evidence" value="ECO:0007669"/>
    <property type="project" value="UniProtKB-UniRule"/>
</dbReference>
<dbReference type="GO" id="GO:0009853">
    <property type="term" value="P:photorespiration"/>
    <property type="evidence" value="ECO:0007669"/>
    <property type="project" value="UniProtKB-KW"/>
</dbReference>
<dbReference type="GO" id="GO:0019253">
    <property type="term" value="P:reductive pentose-phosphate cycle"/>
    <property type="evidence" value="ECO:0007669"/>
    <property type="project" value="UniProtKB-UniRule"/>
</dbReference>
<dbReference type="CDD" id="cd08212">
    <property type="entry name" value="RuBisCO_large_I"/>
    <property type="match status" value="1"/>
</dbReference>
<dbReference type="FunFam" id="3.20.20.110:FF:000001">
    <property type="entry name" value="Ribulose bisphosphate carboxylase large chain"/>
    <property type="match status" value="1"/>
</dbReference>
<dbReference type="FunFam" id="3.30.70.150:FF:000001">
    <property type="entry name" value="Ribulose bisphosphate carboxylase large chain"/>
    <property type="match status" value="1"/>
</dbReference>
<dbReference type="Gene3D" id="3.20.20.110">
    <property type="entry name" value="Ribulose bisphosphate carboxylase, large subunit, C-terminal domain"/>
    <property type="match status" value="1"/>
</dbReference>
<dbReference type="Gene3D" id="3.30.70.150">
    <property type="entry name" value="RuBisCO large subunit, N-terminal domain"/>
    <property type="match status" value="1"/>
</dbReference>
<dbReference type="HAMAP" id="MF_01338">
    <property type="entry name" value="RuBisCO_L_type1"/>
    <property type="match status" value="1"/>
</dbReference>
<dbReference type="InterPro" id="IPR033966">
    <property type="entry name" value="RuBisCO"/>
</dbReference>
<dbReference type="InterPro" id="IPR020878">
    <property type="entry name" value="RuBisCo_large_chain_AS"/>
</dbReference>
<dbReference type="InterPro" id="IPR000685">
    <property type="entry name" value="RuBisCO_lsu_C"/>
</dbReference>
<dbReference type="InterPro" id="IPR036376">
    <property type="entry name" value="RuBisCO_lsu_C_sf"/>
</dbReference>
<dbReference type="InterPro" id="IPR017443">
    <property type="entry name" value="RuBisCO_lsu_fd_N"/>
</dbReference>
<dbReference type="InterPro" id="IPR036422">
    <property type="entry name" value="RuBisCO_lsu_N_sf"/>
</dbReference>
<dbReference type="InterPro" id="IPR020888">
    <property type="entry name" value="RuBisCO_lsuI"/>
</dbReference>
<dbReference type="NCBIfam" id="NF003252">
    <property type="entry name" value="PRK04208.1"/>
    <property type="match status" value="1"/>
</dbReference>
<dbReference type="PANTHER" id="PTHR42704">
    <property type="entry name" value="RIBULOSE BISPHOSPHATE CARBOXYLASE"/>
    <property type="match status" value="1"/>
</dbReference>
<dbReference type="PANTHER" id="PTHR42704:SF15">
    <property type="entry name" value="RIBULOSE BISPHOSPHATE CARBOXYLASE LARGE CHAIN"/>
    <property type="match status" value="1"/>
</dbReference>
<dbReference type="Pfam" id="PF00016">
    <property type="entry name" value="RuBisCO_large"/>
    <property type="match status" value="1"/>
</dbReference>
<dbReference type="Pfam" id="PF02788">
    <property type="entry name" value="RuBisCO_large_N"/>
    <property type="match status" value="1"/>
</dbReference>
<dbReference type="SFLD" id="SFLDG01052">
    <property type="entry name" value="RuBisCO"/>
    <property type="match status" value="1"/>
</dbReference>
<dbReference type="SFLD" id="SFLDS00014">
    <property type="entry name" value="RuBisCO"/>
    <property type="match status" value="1"/>
</dbReference>
<dbReference type="SFLD" id="SFLDG00301">
    <property type="entry name" value="RuBisCO-like_proteins"/>
    <property type="match status" value="1"/>
</dbReference>
<dbReference type="SUPFAM" id="SSF51649">
    <property type="entry name" value="RuBisCo, C-terminal domain"/>
    <property type="match status" value="1"/>
</dbReference>
<dbReference type="SUPFAM" id="SSF54966">
    <property type="entry name" value="RuBisCO, large subunit, small (N-terminal) domain"/>
    <property type="match status" value="1"/>
</dbReference>
<dbReference type="PROSITE" id="PS00157">
    <property type="entry name" value="RUBISCO_LARGE"/>
    <property type="match status" value="1"/>
</dbReference>
<keyword id="KW-0007">Acetylation</keyword>
<keyword id="KW-0113">Calvin cycle</keyword>
<keyword id="KW-0120">Carbon dioxide fixation</keyword>
<keyword id="KW-0150">Chloroplast</keyword>
<keyword id="KW-1015">Disulfide bond</keyword>
<keyword id="KW-0456">Lyase</keyword>
<keyword id="KW-0460">Magnesium</keyword>
<keyword id="KW-0479">Metal-binding</keyword>
<keyword id="KW-0488">Methylation</keyword>
<keyword id="KW-0503">Monooxygenase</keyword>
<keyword id="KW-0560">Oxidoreductase</keyword>
<keyword id="KW-0601">Photorespiration</keyword>
<keyword id="KW-0602">Photosynthesis</keyword>
<keyword id="KW-0934">Plastid</keyword>
<reference key="1">
    <citation type="journal article" date="2008" name="Nucleic Acids Res.">
        <title>The complete nucleotide sequences of the five genetically distinct plastid genomes of Oenothera, subsection Oenothera: I. Sequence evaluation and plastome evolution.</title>
        <authorList>
            <person name="Greiner S."/>
            <person name="Wang X."/>
            <person name="Rauwolf U."/>
            <person name="Silber M.V."/>
            <person name="Mayer K."/>
            <person name="Meurer J."/>
            <person name="Haberer G."/>
            <person name="Herrmann R.G."/>
        </authorList>
    </citation>
    <scope>NUCLEOTIDE SEQUENCE [LARGE SCALE GENOMIC DNA]</scope>
    <source>
        <strain>cv. Suaveolens Grado</strain>
    </source>
</reference>
<protein>
    <recommendedName>
        <fullName evidence="1">Ribulose bisphosphate carboxylase large chain</fullName>
        <shortName evidence="1">RuBisCO large subunit</shortName>
        <ecNumber evidence="1">4.1.1.39</ecNumber>
    </recommendedName>
</protein>
<gene>
    <name evidence="1" type="primary">rbcL</name>
</gene>
<name>RBL_OENBI</name>
<comment type="function">
    <text evidence="1">RuBisCO catalyzes two reactions: the carboxylation of D-ribulose 1,5-bisphosphate, the primary event in carbon dioxide fixation, as well as the oxidative fragmentation of the pentose substrate in the photorespiration process. Both reactions occur simultaneously and in competition at the same active site.</text>
</comment>
<comment type="catalytic activity">
    <reaction evidence="1">
        <text>2 (2R)-3-phosphoglycerate + 2 H(+) = D-ribulose 1,5-bisphosphate + CO2 + H2O</text>
        <dbReference type="Rhea" id="RHEA:23124"/>
        <dbReference type="ChEBI" id="CHEBI:15377"/>
        <dbReference type="ChEBI" id="CHEBI:15378"/>
        <dbReference type="ChEBI" id="CHEBI:16526"/>
        <dbReference type="ChEBI" id="CHEBI:57870"/>
        <dbReference type="ChEBI" id="CHEBI:58272"/>
        <dbReference type="EC" id="4.1.1.39"/>
    </reaction>
</comment>
<comment type="catalytic activity">
    <reaction evidence="1">
        <text>D-ribulose 1,5-bisphosphate + O2 = 2-phosphoglycolate + (2R)-3-phosphoglycerate + 2 H(+)</text>
        <dbReference type="Rhea" id="RHEA:36631"/>
        <dbReference type="ChEBI" id="CHEBI:15378"/>
        <dbReference type="ChEBI" id="CHEBI:15379"/>
        <dbReference type="ChEBI" id="CHEBI:57870"/>
        <dbReference type="ChEBI" id="CHEBI:58033"/>
        <dbReference type="ChEBI" id="CHEBI:58272"/>
    </reaction>
</comment>
<comment type="cofactor">
    <cofactor evidence="1">
        <name>Mg(2+)</name>
        <dbReference type="ChEBI" id="CHEBI:18420"/>
    </cofactor>
    <text evidence="1">Binds 1 Mg(2+) ion per subunit.</text>
</comment>
<comment type="subunit">
    <text evidence="1">Heterohexadecamer of 8 large chains and 8 small chains; disulfide-linked. The disulfide link is formed within the large subunit homodimers.</text>
</comment>
<comment type="subcellular location">
    <subcellularLocation>
        <location>Plastid</location>
        <location>Chloroplast</location>
    </subcellularLocation>
</comment>
<comment type="PTM">
    <text evidence="1">The disulfide bond which can form in the large chain dimeric partners within the hexadecamer appears to be associated with oxidative stress and protein turnover.</text>
</comment>
<comment type="miscellaneous">
    <text evidence="1">The basic functional RuBisCO is composed of a large chain homodimer in a 'head-to-tail' conformation. In form I RuBisCO this homodimer is arranged in a barrel-like tetramer with the small subunits forming a tetrameric 'cap' on each end of the 'barrel'.</text>
</comment>
<comment type="similarity">
    <text evidence="1">Belongs to the RuBisCO large chain family. Type I subfamily.</text>
</comment>
<accession>B0Z4U3</accession>
<organism>
    <name type="scientific">Oenothera biennis</name>
    <name type="common">German evening primrose</name>
    <name type="synonym">Onagra biennis</name>
    <dbReference type="NCBI Taxonomy" id="3942"/>
    <lineage>
        <taxon>Eukaryota</taxon>
        <taxon>Viridiplantae</taxon>
        <taxon>Streptophyta</taxon>
        <taxon>Embryophyta</taxon>
        <taxon>Tracheophyta</taxon>
        <taxon>Spermatophyta</taxon>
        <taxon>Magnoliopsida</taxon>
        <taxon>eudicotyledons</taxon>
        <taxon>Gunneridae</taxon>
        <taxon>Pentapetalae</taxon>
        <taxon>rosids</taxon>
        <taxon>malvids</taxon>
        <taxon>Myrtales</taxon>
        <taxon>Onagraceae</taxon>
        <taxon>Onagroideae</taxon>
        <taxon>Onagreae</taxon>
        <taxon>Oenothera</taxon>
    </lineage>
</organism>
<proteinExistence type="inferred from homology"/>
<geneLocation type="chloroplast"/>
<evidence type="ECO:0000255" key="1">
    <source>
        <dbReference type="HAMAP-Rule" id="MF_01338"/>
    </source>
</evidence>
<feature type="propeptide" id="PRO_0000355794" evidence="1">
    <location>
        <begin position="1"/>
        <end position="2"/>
    </location>
</feature>
<feature type="chain" id="PRO_0000355795" description="Ribulose bisphosphate carboxylase large chain">
    <location>
        <begin position="3"/>
        <end position="475"/>
    </location>
</feature>
<feature type="active site" description="Proton acceptor" evidence="1">
    <location>
        <position position="175"/>
    </location>
</feature>
<feature type="active site" description="Proton acceptor" evidence="1">
    <location>
        <position position="294"/>
    </location>
</feature>
<feature type="binding site" description="in homodimeric partner" evidence="1">
    <location>
        <position position="123"/>
    </location>
    <ligand>
        <name>substrate</name>
    </ligand>
</feature>
<feature type="binding site" evidence="1">
    <location>
        <position position="173"/>
    </location>
    <ligand>
        <name>substrate</name>
    </ligand>
</feature>
<feature type="binding site" evidence="1">
    <location>
        <position position="177"/>
    </location>
    <ligand>
        <name>substrate</name>
    </ligand>
</feature>
<feature type="binding site" description="via carbamate group" evidence="1">
    <location>
        <position position="201"/>
    </location>
    <ligand>
        <name>Mg(2+)</name>
        <dbReference type="ChEBI" id="CHEBI:18420"/>
    </ligand>
</feature>
<feature type="binding site" evidence="1">
    <location>
        <position position="203"/>
    </location>
    <ligand>
        <name>Mg(2+)</name>
        <dbReference type="ChEBI" id="CHEBI:18420"/>
    </ligand>
</feature>
<feature type="binding site" evidence="1">
    <location>
        <position position="204"/>
    </location>
    <ligand>
        <name>Mg(2+)</name>
        <dbReference type="ChEBI" id="CHEBI:18420"/>
    </ligand>
</feature>
<feature type="binding site" evidence="1">
    <location>
        <position position="295"/>
    </location>
    <ligand>
        <name>substrate</name>
    </ligand>
</feature>
<feature type="binding site" evidence="1">
    <location>
        <position position="327"/>
    </location>
    <ligand>
        <name>substrate</name>
    </ligand>
</feature>
<feature type="binding site" evidence="1">
    <location>
        <position position="379"/>
    </location>
    <ligand>
        <name>substrate</name>
    </ligand>
</feature>
<feature type="site" description="Transition state stabilizer" evidence="1">
    <location>
        <position position="334"/>
    </location>
</feature>
<feature type="modified residue" description="N-acetylproline" evidence="1">
    <location>
        <position position="3"/>
    </location>
</feature>
<feature type="modified residue" description="N6,N6,N6-trimethyllysine" evidence="1">
    <location>
        <position position="14"/>
    </location>
</feature>
<feature type="modified residue" description="N6-carboxylysine" evidence="1">
    <location>
        <position position="201"/>
    </location>
</feature>
<feature type="disulfide bond" description="Interchain; in linked form" evidence="1">
    <location>
        <position position="247"/>
    </location>
</feature>
<sequence length="475" mass="52797">MSPQTETKASVGFKAGVKDYKLTYYTPEYETKDTDILAAFRVTPQPGVPPEEAGAAVAAESSTGTWTTVWTDGLTSLDRYKGRCYHIEPVAGEENQYICYVAYPLDLFEEGSVTNMFTSIVGNVFGFKALRALRLEDLRIPTAYVKTFQGPPHGIQVERDKLNKYGRPLLGCTIKPKLGLSAKNYGRAVYECLRGGLDFTKDDENVNSQPFMRWRDRFLFCAEAIYKSQAETGEIKGHYLNATAGTCEEMMKRAIFARELGVPIVMHDYLTGGFTANTSLAHYCRDNGLLLHIHRAMHAVIDRQKNHGIHFRVLAKALRMSGGDHIHSGTVVGKLEGERDITLGFVDLLRDDFIEKDRSRGIYFTQDWVSLPGVLPVASGGIHVWHMPALTEIFGDDSVLQFGGGTLGHPWGNAPGAVANRVALEACVQARNEGRDLAREGNEIIREACKWSPELAAACEVWKEIKFEFQAMDTL</sequence>